<reference key="1">
    <citation type="submission" date="2003-06" db="EMBL/GenBank/DDBJ databases">
        <title>The complete genome sequence of Haemophilus ducreyi.</title>
        <authorList>
            <person name="Munson R.S. Jr."/>
            <person name="Ray W.C."/>
            <person name="Mahairas G."/>
            <person name="Sabo P."/>
            <person name="Mungur R."/>
            <person name="Johnson L."/>
            <person name="Nguyen D."/>
            <person name="Wang J."/>
            <person name="Forst C."/>
            <person name="Hood L."/>
        </authorList>
    </citation>
    <scope>NUCLEOTIDE SEQUENCE [LARGE SCALE GENOMIC DNA]</scope>
    <source>
        <strain>35000HP / ATCC 700724</strain>
    </source>
</reference>
<protein>
    <recommendedName>
        <fullName evidence="1">Polyribonucleotide nucleotidyltransferase</fullName>
        <ecNumber evidence="1">2.7.7.8</ecNumber>
    </recommendedName>
    <alternativeName>
        <fullName evidence="1">Polynucleotide phosphorylase</fullName>
        <shortName evidence="1">PNPase</shortName>
    </alternativeName>
</protein>
<feature type="chain" id="PRO_0000329669" description="Polyribonucleotide nucleotidyltransferase">
    <location>
        <begin position="1"/>
        <end position="712"/>
    </location>
</feature>
<feature type="domain" description="KH" evidence="1">
    <location>
        <begin position="552"/>
        <end position="611"/>
    </location>
</feature>
<feature type="domain" description="S1 motif" evidence="1">
    <location>
        <begin position="621"/>
        <end position="689"/>
    </location>
</feature>
<feature type="binding site" evidence="1">
    <location>
        <position position="485"/>
    </location>
    <ligand>
        <name>Mg(2+)</name>
        <dbReference type="ChEBI" id="CHEBI:18420"/>
    </ligand>
</feature>
<feature type="binding site" evidence="1">
    <location>
        <position position="491"/>
    </location>
    <ligand>
        <name>Mg(2+)</name>
        <dbReference type="ChEBI" id="CHEBI:18420"/>
    </ligand>
</feature>
<evidence type="ECO:0000255" key="1">
    <source>
        <dbReference type="HAMAP-Rule" id="MF_01595"/>
    </source>
</evidence>
<accession>Q7VL91</accession>
<proteinExistence type="inferred from homology"/>
<sequence>MTPIVKQFKYGQHTVTLETGAIARQATAAVMASMDDTTVFVSVVAKKEVKEGQDFFPLTVNYQERTYAAGRIPGGFFKREGRPSENETLIARLIDRPIRPLFPEGFFNEIQIVATVVSVNPQISPDLVAMIGASAALSLSGVPFNGPIGAARVGFINDQFVLNPTITEQKQSRLDLVVAGTDKAVLMVESEADILSEEQMLAAVVFGHQQQQIVIENIKEFVKEAGKPRWDWQPAEANTALINQVKALAETRIGDAYRITEKQARYEQIDAIKADVIAQLTAQDETISEGAIIDIITALESSVVRGRILAGEPRIDGRTVDTVRALNICTGVLPRTHGSAIFTRGETQALAVATLGTERDAQIIDELTGEKSDRFLFHYNFPPYSVGETGMIGSPKRREIGHGRLAKRGVLAVMPSAEEFPYVVRVVSEITESNGSSSMASVCGASLALMDAGVPIKATVAGIAMGLVKEDEKFVVLSDILGDEDHLGDMDFKVAGTRKGITALQMDIKIEGITPEIMHIALNQAKGARMHILNVMEQALPAPRADLSDFAPRIHTMKIDPKKIKDVIGKGGAVIRSLTEETGTSIDIDDDGTVKIAATDNNAAKMVMSRIEEIVAEVEVNAIYTGKVSRVVDFGAFVTILGGKEGLVHISQITDARVERVSDYLSVGQEVNVKVVEIDRQNRIRLTMKDLDNNLSTNVTPEAVVQEESTEN</sequence>
<gene>
    <name evidence="1" type="primary">pnp</name>
    <name type="ordered locus">HD_1588</name>
</gene>
<dbReference type="EC" id="2.7.7.8" evidence="1"/>
<dbReference type="EMBL" id="AE017143">
    <property type="protein sequence ID" value="AAP96368.1"/>
    <property type="molecule type" value="Genomic_DNA"/>
</dbReference>
<dbReference type="RefSeq" id="WP_010945400.1">
    <property type="nucleotide sequence ID" value="NC_002940.2"/>
</dbReference>
<dbReference type="SMR" id="Q7VL91"/>
<dbReference type="STRING" id="233412.HD_1588"/>
<dbReference type="KEGG" id="hdu:HD_1588"/>
<dbReference type="eggNOG" id="COG1185">
    <property type="taxonomic scope" value="Bacteria"/>
</dbReference>
<dbReference type="HOGENOM" id="CLU_004217_2_2_6"/>
<dbReference type="OrthoDB" id="9804305at2"/>
<dbReference type="Proteomes" id="UP000001022">
    <property type="component" value="Chromosome"/>
</dbReference>
<dbReference type="GO" id="GO:0005829">
    <property type="term" value="C:cytosol"/>
    <property type="evidence" value="ECO:0007669"/>
    <property type="project" value="TreeGrafter"/>
</dbReference>
<dbReference type="GO" id="GO:0000175">
    <property type="term" value="F:3'-5'-RNA exonuclease activity"/>
    <property type="evidence" value="ECO:0007669"/>
    <property type="project" value="TreeGrafter"/>
</dbReference>
<dbReference type="GO" id="GO:0000287">
    <property type="term" value="F:magnesium ion binding"/>
    <property type="evidence" value="ECO:0007669"/>
    <property type="project" value="UniProtKB-UniRule"/>
</dbReference>
<dbReference type="GO" id="GO:0004654">
    <property type="term" value="F:polyribonucleotide nucleotidyltransferase activity"/>
    <property type="evidence" value="ECO:0007669"/>
    <property type="project" value="UniProtKB-UniRule"/>
</dbReference>
<dbReference type="GO" id="GO:0003723">
    <property type="term" value="F:RNA binding"/>
    <property type="evidence" value="ECO:0007669"/>
    <property type="project" value="UniProtKB-UniRule"/>
</dbReference>
<dbReference type="GO" id="GO:0006402">
    <property type="term" value="P:mRNA catabolic process"/>
    <property type="evidence" value="ECO:0007669"/>
    <property type="project" value="UniProtKB-UniRule"/>
</dbReference>
<dbReference type="GO" id="GO:0006396">
    <property type="term" value="P:RNA processing"/>
    <property type="evidence" value="ECO:0007669"/>
    <property type="project" value="InterPro"/>
</dbReference>
<dbReference type="CDD" id="cd02393">
    <property type="entry name" value="KH-I_PNPase"/>
    <property type="match status" value="1"/>
</dbReference>
<dbReference type="CDD" id="cd11363">
    <property type="entry name" value="RNase_PH_PNPase_1"/>
    <property type="match status" value="1"/>
</dbReference>
<dbReference type="CDD" id="cd11364">
    <property type="entry name" value="RNase_PH_PNPase_2"/>
    <property type="match status" value="1"/>
</dbReference>
<dbReference type="CDD" id="cd04472">
    <property type="entry name" value="S1_PNPase"/>
    <property type="match status" value="1"/>
</dbReference>
<dbReference type="FunFam" id="2.40.50.140:FF:000023">
    <property type="entry name" value="Polyribonucleotide nucleotidyltransferase"/>
    <property type="match status" value="1"/>
</dbReference>
<dbReference type="FunFam" id="3.30.1370.10:FF:000001">
    <property type="entry name" value="Polyribonucleotide nucleotidyltransferase"/>
    <property type="match status" value="1"/>
</dbReference>
<dbReference type="FunFam" id="3.30.230.70:FF:000001">
    <property type="entry name" value="Polyribonucleotide nucleotidyltransferase"/>
    <property type="match status" value="1"/>
</dbReference>
<dbReference type="FunFam" id="3.30.230.70:FF:000002">
    <property type="entry name" value="Polyribonucleotide nucleotidyltransferase"/>
    <property type="match status" value="1"/>
</dbReference>
<dbReference type="Gene3D" id="3.30.230.70">
    <property type="entry name" value="GHMP Kinase, N-terminal domain"/>
    <property type="match status" value="2"/>
</dbReference>
<dbReference type="Gene3D" id="3.30.1370.10">
    <property type="entry name" value="K Homology domain, type 1"/>
    <property type="match status" value="1"/>
</dbReference>
<dbReference type="Gene3D" id="2.40.50.140">
    <property type="entry name" value="Nucleic acid-binding proteins"/>
    <property type="match status" value="1"/>
</dbReference>
<dbReference type="HAMAP" id="MF_01595">
    <property type="entry name" value="PNPase"/>
    <property type="match status" value="1"/>
</dbReference>
<dbReference type="InterPro" id="IPR001247">
    <property type="entry name" value="ExoRNase_PH_dom1"/>
</dbReference>
<dbReference type="InterPro" id="IPR015847">
    <property type="entry name" value="ExoRNase_PH_dom2"/>
</dbReference>
<dbReference type="InterPro" id="IPR036345">
    <property type="entry name" value="ExoRNase_PH_dom2_sf"/>
</dbReference>
<dbReference type="InterPro" id="IPR004087">
    <property type="entry name" value="KH_dom"/>
</dbReference>
<dbReference type="InterPro" id="IPR004088">
    <property type="entry name" value="KH_dom_type_1"/>
</dbReference>
<dbReference type="InterPro" id="IPR036612">
    <property type="entry name" value="KH_dom_type_1_sf"/>
</dbReference>
<dbReference type="InterPro" id="IPR012340">
    <property type="entry name" value="NA-bd_OB-fold"/>
</dbReference>
<dbReference type="InterPro" id="IPR012162">
    <property type="entry name" value="PNPase"/>
</dbReference>
<dbReference type="InterPro" id="IPR027408">
    <property type="entry name" value="PNPase/RNase_PH_dom_sf"/>
</dbReference>
<dbReference type="InterPro" id="IPR015848">
    <property type="entry name" value="PNPase_PH_RNA-bd_bac/org-type"/>
</dbReference>
<dbReference type="InterPro" id="IPR036456">
    <property type="entry name" value="PNPase_PH_RNA-bd_sf"/>
</dbReference>
<dbReference type="InterPro" id="IPR020568">
    <property type="entry name" value="Ribosomal_Su5_D2-typ_SF"/>
</dbReference>
<dbReference type="InterPro" id="IPR003029">
    <property type="entry name" value="S1_domain"/>
</dbReference>
<dbReference type="NCBIfam" id="TIGR03591">
    <property type="entry name" value="polynuc_phos"/>
    <property type="match status" value="1"/>
</dbReference>
<dbReference type="NCBIfam" id="NF008805">
    <property type="entry name" value="PRK11824.1"/>
    <property type="match status" value="1"/>
</dbReference>
<dbReference type="PANTHER" id="PTHR11252">
    <property type="entry name" value="POLYRIBONUCLEOTIDE NUCLEOTIDYLTRANSFERASE"/>
    <property type="match status" value="1"/>
</dbReference>
<dbReference type="PANTHER" id="PTHR11252:SF0">
    <property type="entry name" value="POLYRIBONUCLEOTIDE NUCLEOTIDYLTRANSFERASE 1, MITOCHONDRIAL"/>
    <property type="match status" value="1"/>
</dbReference>
<dbReference type="Pfam" id="PF00013">
    <property type="entry name" value="KH_1"/>
    <property type="match status" value="1"/>
</dbReference>
<dbReference type="Pfam" id="PF03726">
    <property type="entry name" value="PNPase"/>
    <property type="match status" value="1"/>
</dbReference>
<dbReference type="Pfam" id="PF01138">
    <property type="entry name" value="RNase_PH"/>
    <property type="match status" value="2"/>
</dbReference>
<dbReference type="Pfam" id="PF03725">
    <property type="entry name" value="RNase_PH_C"/>
    <property type="match status" value="2"/>
</dbReference>
<dbReference type="Pfam" id="PF00575">
    <property type="entry name" value="S1"/>
    <property type="match status" value="1"/>
</dbReference>
<dbReference type="PIRSF" id="PIRSF005499">
    <property type="entry name" value="PNPase"/>
    <property type="match status" value="1"/>
</dbReference>
<dbReference type="SMART" id="SM00322">
    <property type="entry name" value="KH"/>
    <property type="match status" value="1"/>
</dbReference>
<dbReference type="SMART" id="SM00316">
    <property type="entry name" value="S1"/>
    <property type="match status" value="1"/>
</dbReference>
<dbReference type="SUPFAM" id="SSF54791">
    <property type="entry name" value="Eukaryotic type KH-domain (KH-domain type I)"/>
    <property type="match status" value="1"/>
</dbReference>
<dbReference type="SUPFAM" id="SSF50249">
    <property type="entry name" value="Nucleic acid-binding proteins"/>
    <property type="match status" value="1"/>
</dbReference>
<dbReference type="SUPFAM" id="SSF46915">
    <property type="entry name" value="Polynucleotide phosphorylase/guanosine pentaphosphate synthase (PNPase/GPSI), domain 3"/>
    <property type="match status" value="1"/>
</dbReference>
<dbReference type="SUPFAM" id="SSF55666">
    <property type="entry name" value="Ribonuclease PH domain 2-like"/>
    <property type="match status" value="2"/>
</dbReference>
<dbReference type="SUPFAM" id="SSF54211">
    <property type="entry name" value="Ribosomal protein S5 domain 2-like"/>
    <property type="match status" value="2"/>
</dbReference>
<dbReference type="PROSITE" id="PS50084">
    <property type="entry name" value="KH_TYPE_1"/>
    <property type="match status" value="1"/>
</dbReference>
<dbReference type="PROSITE" id="PS50126">
    <property type="entry name" value="S1"/>
    <property type="match status" value="1"/>
</dbReference>
<name>PNP_HAEDU</name>
<comment type="function">
    <text evidence="1">Involved in mRNA degradation. Catalyzes the phosphorolysis of single-stranded polyribonucleotides processively in the 3'- to 5'-direction.</text>
</comment>
<comment type="catalytic activity">
    <reaction evidence="1">
        <text>RNA(n+1) + phosphate = RNA(n) + a ribonucleoside 5'-diphosphate</text>
        <dbReference type="Rhea" id="RHEA:22096"/>
        <dbReference type="Rhea" id="RHEA-COMP:14527"/>
        <dbReference type="Rhea" id="RHEA-COMP:17342"/>
        <dbReference type="ChEBI" id="CHEBI:43474"/>
        <dbReference type="ChEBI" id="CHEBI:57930"/>
        <dbReference type="ChEBI" id="CHEBI:140395"/>
        <dbReference type="EC" id="2.7.7.8"/>
    </reaction>
</comment>
<comment type="cofactor">
    <cofactor evidence="1">
        <name>Mg(2+)</name>
        <dbReference type="ChEBI" id="CHEBI:18420"/>
    </cofactor>
</comment>
<comment type="subunit">
    <text evidence="1">Component of the RNA degradosome, which is a multiprotein complex involved in RNA processing and mRNA degradation.</text>
</comment>
<comment type="subcellular location">
    <subcellularLocation>
        <location evidence="1">Cytoplasm</location>
    </subcellularLocation>
</comment>
<comment type="similarity">
    <text evidence="1">Belongs to the polyribonucleotide nucleotidyltransferase family.</text>
</comment>
<organism>
    <name type="scientific">Haemophilus ducreyi (strain 35000HP / ATCC 700724)</name>
    <dbReference type="NCBI Taxonomy" id="233412"/>
    <lineage>
        <taxon>Bacteria</taxon>
        <taxon>Pseudomonadati</taxon>
        <taxon>Pseudomonadota</taxon>
        <taxon>Gammaproteobacteria</taxon>
        <taxon>Pasteurellales</taxon>
        <taxon>Pasteurellaceae</taxon>
        <taxon>Haemophilus</taxon>
    </lineage>
</organism>
<keyword id="KW-0963">Cytoplasm</keyword>
<keyword id="KW-0460">Magnesium</keyword>
<keyword id="KW-0479">Metal-binding</keyword>
<keyword id="KW-0548">Nucleotidyltransferase</keyword>
<keyword id="KW-1185">Reference proteome</keyword>
<keyword id="KW-0694">RNA-binding</keyword>
<keyword id="KW-0808">Transferase</keyword>